<gene>
    <name evidence="1" type="primary">murG</name>
    <name type="ordered locus">Shewana3_3743</name>
</gene>
<sequence>MTDAGKRILVMAGGTGGHVFPALAVAKYLAQQGWQVRWLGTADRMEARLVPQYGFDIDFIDIKGVRGNGLVRKLAAPFKVVRSILQAKAVIAEFKPDVVLGMGGFASGPGGVAAKLAGVPLVLHEQNAIPGMTNKLLSRIANQVLCAFKNTFTQVKAKVVGNPIRRELIALGAEPKQAADDALKVLVVGGSLGAKVFNDLMPEVVAALSKQQSITVWHQVGKDNLTGVKSAYQQQGQEGGVNVAEFIDDMEAAYRWADVVLCRAGALTVSELAAVGLPSILVPYPHAVDDHQTRNAQVLVEAGAAFLLPQAILDVNKLVSKLQLLANDRAELAQMGQRARDVAVLDATEQVAQVCIALAEKG</sequence>
<protein>
    <recommendedName>
        <fullName evidence="1">UDP-N-acetylglucosamine--N-acetylmuramyl-(pentapeptide) pyrophosphoryl-undecaprenol N-acetylglucosamine transferase</fullName>
        <ecNumber evidence="1">2.4.1.227</ecNumber>
    </recommendedName>
    <alternativeName>
        <fullName evidence="1">Undecaprenyl-PP-MurNAc-pentapeptide-UDPGlcNAc GlcNAc transferase</fullName>
    </alternativeName>
</protein>
<dbReference type="EC" id="2.4.1.227" evidence="1"/>
<dbReference type="EMBL" id="CP000469">
    <property type="protein sequence ID" value="ABK49961.1"/>
    <property type="molecule type" value="Genomic_DNA"/>
</dbReference>
<dbReference type="RefSeq" id="WP_011624928.1">
    <property type="nucleotide sequence ID" value="NC_008577.1"/>
</dbReference>
<dbReference type="SMR" id="A0L1P2"/>
<dbReference type="STRING" id="94122.Shewana3_3743"/>
<dbReference type="CAZy" id="GT28">
    <property type="family name" value="Glycosyltransferase Family 28"/>
</dbReference>
<dbReference type="KEGG" id="shn:Shewana3_3743"/>
<dbReference type="eggNOG" id="COG0707">
    <property type="taxonomic scope" value="Bacteria"/>
</dbReference>
<dbReference type="HOGENOM" id="CLU_037404_2_0_6"/>
<dbReference type="OrthoDB" id="9808936at2"/>
<dbReference type="UniPathway" id="UPA00219"/>
<dbReference type="Proteomes" id="UP000002589">
    <property type="component" value="Chromosome"/>
</dbReference>
<dbReference type="GO" id="GO:0005886">
    <property type="term" value="C:plasma membrane"/>
    <property type="evidence" value="ECO:0007669"/>
    <property type="project" value="UniProtKB-SubCell"/>
</dbReference>
<dbReference type="GO" id="GO:0051991">
    <property type="term" value="F:UDP-N-acetyl-D-glucosamine:N-acetylmuramoyl-L-alanyl-D-glutamyl-meso-2,6-diaminopimelyl-D-alanyl-D-alanine-diphosphoundecaprenol 4-beta-N-acetylglucosaminlytransferase activity"/>
    <property type="evidence" value="ECO:0007669"/>
    <property type="project" value="RHEA"/>
</dbReference>
<dbReference type="GO" id="GO:0050511">
    <property type="term" value="F:undecaprenyldiphospho-muramoylpentapeptide beta-N-acetylglucosaminyltransferase activity"/>
    <property type="evidence" value="ECO:0007669"/>
    <property type="project" value="UniProtKB-UniRule"/>
</dbReference>
<dbReference type="GO" id="GO:0005975">
    <property type="term" value="P:carbohydrate metabolic process"/>
    <property type="evidence" value="ECO:0007669"/>
    <property type="project" value="InterPro"/>
</dbReference>
<dbReference type="GO" id="GO:0051301">
    <property type="term" value="P:cell division"/>
    <property type="evidence" value="ECO:0007669"/>
    <property type="project" value="UniProtKB-KW"/>
</dbReference>
<dbReference type="GO" id="GO:0071555">
    <property type="term" value="P:cell wall organization"/>
    <property type="evidence" value="ECO:0007669"/>
    <property type="project" value="UniProtKB-KW"/>
</dbReference>
<dbReference type="GO" id="GO:0030259">
    <property type="term" value="P:lipid glycosylation"/>
    <property type="evidence" value="ECO:0007669"/>
    <property type="project" value="UniProtKB-UniRule"/>
</dbReference>
<dbReference type="GO" id="GO:0009252">
    <property type="term" value="P:peptidoglycan biosynthetic process"/>
    <property type="evidence" value="ECO:0007669"/>
    <property type="project" value="UniProtKB-UniRule"/>
</dbReference>
<dbReference type="GO" id="GO:0008360">
    <property type="term" value="P:regulation of cell shape"/>
    <property type="evidence" value="ECO:0007669"/>
    <property type="project" value="UniProtKB-KW"/>
</dbReference>
<dbReference type="CDD" id="cd03785">
    <property type="entry name" value="GT28_MurG"/>
    <property type="match status" value="1"/>
</dbReference>
<dbReference type="Gene3D" id="3.40.50.2000">
    <property type="entry name" value="Glycogen Phosphorylase B"/>
    <property type="match status" value="2"/>
</dbReference>
<dbReference type="HAMAP" id="MF_00033">
    <property type="entry name" value="MurG"/>
    <property type="match status" value="1"/>
</dbReference>
<dbReference type="InterPro" id="IPR006009">
    <property type="entry name" value="GlcNAc_MurG"/>
</dbReference>
<dbReference type="InterPro" id="IPR007235">
    <property type="entry name" value="Glyco_trans_28_C"/>
</dbReference>
<dbReference type="InterPro" id="IPR004276">
    <property type="entry name" value="GlycoTrans_28_N"/>
</dbReference>
<dbReference type="NCBIfam" id="TIGR01133">
    <property type="entry name" value="murG"/>
    <property type="match status" value="1"/>
</dbReference>
<dbReference type="PANTHER" id="PTHR21015:SF22">
    <property type="entry name" value="GLYCOSYLTRANSFERASE"/>
    <property type="match status" value="1"/>
</dbReference>
<dbReference type="PANTHER" id="PTHR21015">
    <property type="entry name" value="UDP-N-ACETYLGLUCOSAMINE--N-ACETYLMURAMYL-(PENTAPEPTIDE) PYROPHOSPHORYL-UNDECAPRENOL N-ACETYLGLUCOSAMINE TRANSFERASE 1"/>
    <property type="match status" value="1"/>
</dbReference>
<dbReference type="Pfam" id="PF04101">
    <property type="entry name" value="Glyco_tran_28_C"/>
    <property type="match status" value="1"/>
</dbReference>
<dbReference type="Pfam" id="PF03033">
    <property type="entry name" value="Glyco_transf_28"/>
    <property type="match status" value="1"/>
</dbReference>
<dbReference type="SUPFAM" id="SSF53756">
    <property type="entry name" value="UDP-Glycosyltransferase/glycogen phosphorylase"/>
    <property type="match status" value="1"/>
</dbReference>
<evidence type="ECO:0000255" key="1">
    <source>
        <dbReference type="HAMAP-Rule" id="MF_00033"/>
    </source>
</evidence>
<keyword id="KW-0131">Cell cycle</keyword>
<keyword id="KW-0132">Cell division</keyword>
<keyword id="KW-0997">Cell inner membrane</keyword>
<keyword id="KW-1003">Cell membrane</keyword>
<keyword id="KW-0133">Cell shape</keyword>
<keyword id="KW-0961">Cell wall biogenesis/degradation</keyword>
<keyword id="KW-0328">Glycosyltransferase</keyword>
<keyword id="KW-0472">Membrane</keyword>
<keyword id="KW-0573">Peptidoglycan synthesis</keyword>
<keyword id="KW-0808">Transferase</keyword>
<reference key="1">
    <citation type="submission" date="2006-09" db="EMBL/GenBank/DDBJ databases">
        <title>Complete sequence of chromosome 1 of Shewanella sp. ANA-3.</title>
        <authorList>
            <person name="Copeland A."/>
            <person name="Lucas S."/>
            <person name="Lapidus A."/>
            <person name="Barry K."/>
            <person name="Detter J.C."/>
            <person name="Glavina del Rio T."/>
            <person name="Hammon N."/>
            <person name="Israni S."/>
            <person name="Dalin E."/>
            <person name="Tice H."/>
            <person name="Pitluck S."/>
            <person name="Chertkov O."/>
            <person name="Brettin T."/>
            <person name="Bruce D."/>
            <person name="Han C."/>
            <person name="Tapia R."/>
            <person name="Gilna P."/>
            <person name="Schmutz J."/>
            <person name="Larimer F."/>
            <person name="Land M."/>
            <person name="Hauser L."/>
            <person name="Kyrpides N."/>
            <person name="Kim E."/>
            <person name="Newman D."/>
            <person name="Salticov C."/>
            <person name="Konstantinidis K."/>
            <person name="Klappenback J."/>
            <person name="Tiedje J."/>
            <person name="Richardson P."/>
        </authorList>
    </citation>
    <scope>NUCLEOTIDE SEQUENCE [LARGE SCALE GENOMIC DNA]</scope>
    <source>
        <strain>ANA-3</strain>
    </source>
</reference>
<accession>A0L1P2</accession>
<proteinExistence type="inferred from homology"/>
<organism>
    <name type="scientific">Shewanella sp. (strain ANA-3)</name>
    <dbReference type="NCBI Taxonomy" id="94122"/>
    <lineage>
        <taxon>Bacteria</taxon>
        <taxon>Pseudomonadati</taxon>
        <taxon>Pseudomonadota</taxon>
        <taxon>Gammaproteobacteria</taxon>
        <taxon>Alteromonadales</taxon>
        <taxon>Shewanellaceae</taxon>
        <taxon>Shewanella</taxon>
    </lineage>
</organism>
<name>MURG_SHESA</name>
<feature type="chain" id="PRO_1000002690" description="UDP-N-acetylglucosamine--N-acetylmuramyl-(pentapeptide) pyrophosphoryl-undecaprenol N-acetylglucosamine transferase">
    <location>
        <begin position="1"/>
        <end position="362"/>
    </location>
</feature>
<feature type="binding site" evidence="1">
    <location>
        <begin position="15"/>
        <end position="17"/>
    </location>
    <ligand>
        <name>UDP-N-acetyl-alpha-D-glucosamine</name>
        <dbReference type="ChEBI" id="CHEBI:57705"/>
    </ligand>
</feature>
<feature type="binding site" evidence="1">
    <location>
        <position position="127"/>
    </location>
    <ligand>
        <name>UDP-N-acetyl-alpha-D-glucosamine</name>
        <dbReference type="ChEBI" id="CHEBI:57705"/>
    </ligand>
</feature>
<feature type="binding site" evidence="1">
    <location>
        <position position="165"/>
    </location>
    <ligand>
        <name>UDP-N-acetyl-alpha-D-glucosamine</name>
        <dbReference type="ChEBI" id="CHEBI:57705"/>
    </ligand>
</feature>
<feature type="binding site" evidence="1">
    <location>
        <position position="191"/>
    </location>
    <ligand>
        <name>UDP-N-acetyl-alpha-D-glucosamine</name>
        <dbReference type="ChEBI" id="CHEBI:57705"/>
    </ligand>
</feature>
<feature type="binding site" evidence="1">
    <location>
        <position position="247"/>
    </location>
    <ligand>
        <name>UDP-N-acetyl-alpha-D-glucosamine</name>
        <dbReference type="ChEBI" id="CHEBI:57705"/>
    </ligand>
</feature>
<feature type="binding site" evidence="1">
    <location>
        <begin position="266"/>
        <end position="271"/>
    </location>
    <ligand>
        <name>UDP-N-acetyl-alpha-D-glucosamine</name>
        <dbReference type="ChEBI" id="CHEBI:57705"/>
    </ligand>
</feature>
<feature type="binding site" evidence="1">
    <location>
        <position position="292"/>
    </location>
    <ligand>
        <name>UDP-N-acetyl-alpha-D-glucosamine</name>
        <dbReference type="ChEBI" id="CHEBI:57705"/>
    </ligand>
</feature>
<comment type="function">
    <text evidence="1">Cell wall formation. Catalyzes the transfer of a GlcNAc subunit on undecaprenyl-pyrophosphoryl-MurNAc-pentapeptide (lipid intermediate I) to form undecaprenyl-pyrophosphoryl-MurNAc-(pentapeptide)GlcNAc (lipid intermediate II).</text>
</comment>
<comment type="catalytic activity">
    <reaction evidence="1">
        <text>di-trans,octa-cis-undecaprenyl diphospho-N-acetyl-alpha-D-muramoyl-L-alanyl-D-glutamyl-meso-2,6-diaminopimeloyl-D-alanyl-D-alanine + UDP-N-acetyl-alpha-D-glucosamine = di-trans,octa-cis-undecaprenyl diphospho-[N-acetyl-alpha-D-glucosaminyl-(1-&gt;4)]-N-acetyl-alpha-D-muramoyl-L-alanyl-D-glutamyl-meso-2,6-diaminopimeloyl-D-alanyl-D-alanine + UDP + H(+)</text>
        <dbReference type="Rhea" id="RHEA:31227"/>
        <dbReference type="ChEBI" id="CHEBI:15378"/>
        <dbReference type="ChEBI" id="CHEBI:57705"/>
        <dbReference type="ChEBI" id="CHEBI:58223"/>
        <dbReference type="ChEBI" id="CHEBI:61387"/>
        <dbReference type="ChEBI" id="CHEBI:61388"/>
        <dbReference type="EC" id="2.4.1.227"/>
    </reaction>
</comment>
<comment type="pathway">
    <text evidence="1">Cell wall biogenesis; peptidoglycan biosynthesis.</text>
</comment>
<comment type="subcellular location">
    <subcellularLocation>
        <location evidence="1">Cell inner membrane</location>
        <topology evidence="1">Peripheral membrane protein</topology>
        <orientation evidence="1">Cytoplasmic side</orientation>
    </subcellularLocation>
</comment>
<comment type="similarity">
    <text evidence="1">Belongs to the glycosyltransferase 28 family. MurG subfamily.</text>
</comment>